<proteinExistence type="evidence at protein level"/>
<evidence type="ECO:0000250" key="1">
    <source>
        <dbReference type="UniProtKB" id="P80398"/>
    </source>
</evidence>
<evidence type="ECO:0000255" key="2"/>
<evidence type="ECO:0000269" key="3">
    <source>
    </source>
</evidence>
<evidence type="ECO:0000303" key="4">
    <source>
    </source>
</evidence>
<evidence type="ECO:0000305" key="5">
    <source>
    </source>
</evidence>
<evidence type="ECO:0000312" key="6">
    <source>
        <dbReference type="EMBL" id="ADM34206.1"/>
    </source>
</evidence>
<name>BR11_AMOCU</name>
<organism evidence="4">
    <name type="scientific">Amolops chunganensis</name>
    <name type="common">Chungan torrent frog</name>
    <name type="synonym">Hylorana chunganensis</name>
    <dbReference type="NCBI Taxonomy" id="325556"/>
    <lineage>
        <taxon>Eukaryota</taxon>
        <taxon>Metazoa</taxon>
        <taxon>Chordata</taxon>
        <taxon>Craniata</taxon>
        <taxon>Vertebrata</taxon>
        <taxon>Euteleostomi</taxon>
        <taxon>Amphibia</taxon>
        <taxon>Batrachia</taxon>
        <taxon>Anura</taxon>
        <taxon>Neobatrachia</taxon>
        <taxon>Ranoidea</taxon>
        <taxon>Ranidae</taxon>
        <taxon>Amolops</taxon>
    </lineage>
</organism>
<protein>
    <recommendedName>
        <fullName evidence="4">Brevinin-1CG1</fullName>
    </recommendedName>
</protein>
<comment type="function">
    <text evidence="3">Antimicrobial peptide. Active against Gram-positive bacteria R.rhodochrous X15 and B.licheniformis X39 and against Gram-negative bacterium E.coli ATCC 25922. Has antifungal activity against a slime mold isolate. Has weak hemolytic activity against human erythrocytes.</text>
</comment>
<comment type="subcellular location">
    <subcellularLocation>
        <location evidence="2 3">Secreted</location>
    </subcellularLocation>
</comment>
<comment type="tissue specificity">
    <text evidence="5">Expressed by the skin glands.</text>
</comment>
<comment type="mass spectrometry" mass="2594.2" method="MALDI" evidence="3"/>
<comment type="similarity">
    <text evidence="2">Belongs to the frog skin active peptide (FSAP) family. Brevinin subfamily.</text>
</comment>
<keyword id="KW-0878">Amphibian defense peptide</keyword>
<keyword id="KW-0044">Antibiotic</keyword>
<keyword id="KW-0929">Antimicrobial</keyword>
<keyword id="KW-0165">Cleavage on pair of basic residues</keyword>
<keyword id="KW-0204">Cytolysis</keyword>
<keyword id="KW-0903">Direct protein sequencing</keyword>
<keyword id="KW-1015">Disulfide bond</keyword>
<keyword id="KW-0295">Fungicide</keyword>
<keyword id="KW-0354">Hemolysis</keyword>
<keyword id="KW-0964">Secreted</keyword>
<keyword id="KW-0732">Signal</keyword>
<dbReference type="EMBL" id="HQ009830">
    <property type="protein sequence ID" value="ADM34206.1"/>
    <property type="molecule type" value="mRNA"/>
</dbReference>
<dbReference type="GO" id="GO:0005576">
    <property type="term" value="C:extracellular region"/>
    <property type="evidence" value="ECO:0007669"/>
    <property type="project" value="UniProtKB-SubCell"/>
</dbReference>
<dbReference type="GO" id="GO:0042742">
    <property type="term" value="P:defense response to bacterium"/>
    <property type="evidence" value="ECO:0007669"/>
    <property type="project" value="UniProtKB-KW"/>
</dbReference>
<dbReference type="GO" id="GO:0050832">
    <property type="term" value="P:defense response to fungus"/>
    <property type="evidence" value="ECO:0007669"/>
    <property type="project" value="UniProtKB-KW"/>
</dbReference>
<dbReference type="GO" id="GO:0031640">
    <property type="term" value="P:killing of cells of another organism"/>
    <property type="evidence" value="ECO:0007669"/>
    <property type="project" value="UniProtKB-KW"/>
</dbReference>
<dbReference type="InterPro" id="IPR012520">
    <property type="entry name" value="Antimicrobial_frog_1"/>
</dbReference>
<dbReference type="InterPro" id="IPR004275">
    <property type="entry name" value="Frog_antimicrobial_propeptide"/>
</dbReference>
<dbReference type="Pfam" id="PF08018">
    <property type="entry name" value="Antimicrobial_1"/>
    <property type="match status" value="1"/>
</dbReference>
<dbReference type="Pfam" id="PF03032">
    <property type="entry name" value="FSAP_sig_propep"/>
    <property type="match status" value="1"/>
</dbReference>
<reference evidence="6" key="1">
    <citation type="journal article" date="2012" name="Peptides">
        <title>Characterization of diverse antimicrobial peptides in skin secretions of Chungan torrent frog Amolops chunganensis.</title>
        <authorList>
            <person name="Yang X."/>
            <person name="Xia J."/>
            <person name="Yu Z."/>
            <person name="Hu Y."/>
            <person name="Li F."/>
            <person name="Meng H."/>
            <person name="Yang S."/>
            <person name="Liu J."/>
            <person name="Wang H."/>
        </authorList>
    </citation>
    <scope>NUCLEOTIDE SEQUENCE [MRNA]</scope>
    <scope>PROTEIN SEQUENCE OF 46-69</scope>
    <scope>FUNCTION</scope>
    <scope>SYNTHESIS</scope>
    <scope>SUBCELLULAR LOCATION</scope>
    <scope>MASS SPECTROMETRY</scope>
    <source>
        <tissue evidence="4">Skin secretion</tissue>
    </source>
</reference>
<feature type="signal peptide" evidence="2">
    <location>
        <begin position="1"/>
        <end position="22"/>
    </location>
</feature>
<feature type="propeptide" id="PRO_0000439724" description="Removed in mature form" evidence="5">
    <location>
        <begin position="23"/>
        <end position="43"/>
    </location>
</feature>
<feature type="peptide" id="PRO_0000439725" description="Brevinin-1CG1" evidence="3">
    <location>
        <begin position="46"/>
        <end position="69"/>
    </location>
</feature>
<feature type="disulfide bond" evidence="1">
    <location>
        <begin position="63"/>
        <end position="69"/>
    </location>
</feature>
<sequence length="69" mass="8001">MFTMKKSLLLLFFLGTINLSLCEQERNAEEERRDDDEMDVEVEKRFLSTALKVAANVVPTLFCKITKKC</sequence>
<accession>E1AWD4</accession>